<gene>
    <name evidence="9" type="primary">CEL6A</name>
    <name type="ordered locus">Pa_0_1250</name>
    <name type="ORF">PODANS_0_1250</name>
</gene>
<evidence type="ECO:0000250" key="1">
    <source>
        <dbReference type="UniProtKB" id="Q9C1S9"/>
    </source>
</evidence>
<evidence type="ECO:0000255" key="2"/>
<evidence type="ECO:0000255" key="3">
    <source>
        <dbReference type="PROSITE-ProRule" id="PRU00498"/>
    </source>
</evidence>
<evidence type="ECO:0000255" key="4">
    <source>
        <dbReference type="PROSITE-ProRule" id="PRU00597"/>
    </source>
</evidence>
<evidence type="ECO:0000255" key="5">
    <source>
        <dbReference type="PROSITE-ProRule" id="PRU10056"/>
    </source>
</evidence>
<evidence type="ECO:0000255" key="6">
    <source>
        <dbReference type="PROSITE-ProRule" id="PRU10057"/>
    </source>
</evidence>
<evidence type="ECO:0000256" key="7">
    <source>
        <dbReference type="SAM" id="MobiDB-lite"/>
    </source>
</evidence>
<evidence type="ECO:0000269" key="8">
    <source>
    </source>
</evidence>
<evidence type="ECO:0000303" key="9">
    <source>
    </source>
</evidence>
<evidence type="ECO:0000305" key="10"/>
<accession>B2ABX7</accession>
<protein>
    <recommendedName>
        <fullName evidence="10">1,4-beta-D-glucan cellobiohydrolase CEL6A</fullName>
        <ecNumber evidence="8">3.2.1.91</ecNumber>
    </recommendedName>
    <alternativeName>
        <fullName evidence="10">Beta-glucancellobiohydrolase CEL6A</fullName>
    </alternativeName>
    <alternativeName>
        <fullName evidence="10">Exocellobiohydrolase CEL6A</fullName>
    </alternativeName>
    <alternativeName>
        <fullName evidence="10">Exoglucanase CEL6A</fullName>
    </alternativeName>
</protein>
<feature type="signal peptide" evidence="2">
    <location>
        <begin position="1"/>
        <end position="17"/>
    </location>
</feature>
<feature type="chain" id="PRO_5001338834" description="1,4-beta-D-glucan cellobiohydrolase CEL6A">
    <location>
        <begin position="18"/>
        <end position="484"/>
    </location>
</feature>
<feature type="domain" description="CBM1" evidence="4">
    <location>
        <begin position="26"/>
        <end position="62"/>
    </location>
</feature>
<feature type="region of interest" description="Disordered" evidence="7">
    <location>
        <begin position="68"/>
        <end position="98"/>
    </location>
</feature>
<feature type="region of interest" description="Substrate binding loop 1" evidence="1">
    <location>
        <begin position="208"/>
        <end position="230"/>
    </location>
</feature>
<feature type="region of interest" description="Substrate binding loop 2" evidence="1">
    <location>
        <begin position="431"/>
        <end position="469"/>
    </location>
</feature>
<feature type="active site" description="Proton donor" evidence="1 6">
    <location>
        <position position="260"/>
    </location>
</feature>
<feature type="active site" description="Proton acceptor" evidence="1 5">
    <location>
        <position position="439"/>
    </location>
</feature>
<feature type="binding site" evidence="1">
    <location>
        <position position="171"/>
    </location>
    <ligand>
        <name>substrate</name>
    </ligand>
</feature>
<feature type="binding site" evidence="1">
    <location>
        <position position="173"/>
    </location>
    <ligand>
        <name>substrate</name>
    </ligand>
</feature>
<feature type="binding site" evidence="1">
    <location>
        <position position="305"/>
    </location>
    <ligand>
        <name>substrate</name>
    </ligand>
</feature>
<feature type="binding site" evidence="1">
    <location>
        <position position="308"/>
    </location>
    <ligand>
        <name>substrate</name>
    </ligand>
</feature>
<feature type="binding site" evidence="1">
    <location>
        <position position="344"/>
    </location>
    <ligand>
        <name>substrate</name>
    </ligand>
</feature>
<feature type="binding site" evidence="1">
    <location>
        <position position="405"/>
    </location>
    <ligand>
        <name>substrate</name>
    </ligand>
</feature>
<feature type="binding site" evidence="1">
    <location>
        <position position="433"/>
    </location>
    <ligand>
        <name>substrate</name>
    </ligand>
</feature>
<feature type="binding site" evidence="1">
    <location>
        <position position="437"/>
    </location>
    <ligand>
        <name>substrate</name>
    </ligand>
</feature>
<feature type="glycosylation site" description="N-linked (GlcNAc...) asparagine" evidence="3">
    <location>
        <position position="175"/>
    </location>
</feature>
<feature type="disulfide bond" evidence="1">
    <location>
        <begin position="34"/>
        <end position="51"/>
    </location>
</feature>
<feature type="disulfide bond" evidence="1">
    <location>
        <begin position="45"/>
        <end position="61"/>
    </location>
</feature>
<proteinExistence type="evidence at protein level"/>
<reference key="1">
    <citation type="journal article" date="2008" name="Genome Biol.">
        <title>The genome sequence of the model ascomycete fungus Podospora anserina.</title>
        <authorList>
            <person name="Espagne E."/>
            <person name="Lespinet O."/>
            <person name="Malagnac F."/>
            <person name="Da Silva C."/>
            <person name="Jaillon O."/>
            <person name="Porcel B.M."/>
            <person name="Couloux A."/>
            <person name="Aury J.-M."/>
            <person name="Segurens B."/>
            <person name="Poulain J."/>
            <person name="Anthouard V."/>
            <person name="Grossetete S."/>
            <person name="Khalili H."/>
            <person name="Coppin E."/>
            <person name="Dequard-Chablat M."/>
            <person name="Picard M."/>
            <person name="Contamine V."/>
            <person name="Arnaise S."/>
            <person name="Bourdais A."/>
            <person name="Berteaux-Lecellier V."/>
            <person name="Gautheret D."/>
            <person name="de Vries R.P."/>
            <person name="Battaglia E."/>
            <person name="Coutinho P.M."/>
            <person name="Danchin E.G.J."/>
            <person name="Henrissat B."/>
            <person name="El Khoury R."/>
            <person name="Sainsard-Chanet A."/>
            <person name="Boivin A."/>
            <person name="Pinan-Lucarre B."/>
            <person name="Sellem C.H."/>
            <person name="Debuchy R."/>
            <person name="Wincker P."/>
            <person name="Weissenbach J."/>
            <person name="Silar P."/>
        </authorList>
    </citation>
    <scope>NUCLEOTIDE SEQUENCE [LARGE SCALE GENOMIC DNA]</scope>
    <source>
        <strain>S / ATCC MYA-4624 / DSM 980 / FGSC 10383</strain>
    </source>
</reference>
<reference key="2">
    <citation type="journal article" date="2014" name="Genetics">
        <title>Maintaining two mating types: Structure of the mating type locus and its role in heterokaryosis in Podospora anserina.</title>
        <authorList>
            <person name="Grognet P."/>
            <person name="Bidard F."/>
            <person name="Kuchly C."/>
            <person name="Tong L.C.H."/>
            <person name="Coppin E."/>
            <person name="Benkhali J.A."/>
            <person name="Couloux A."/>
            <person name="Wincker P."/>
            <person name="Debuchy R."/>
            <person name="Silar P."/>
        </authorList>
    </citation>
    <scope>GENOME REANNOTATION</scope>
    <source>
        <strain>S / ATCC MYA-4624 / DSM 980 / FGSC 10383</strain>
    </source>
</reference>
<reference key="3">
    <citation type="journal article" date="2013" name="Appl. Environ. Microbiol.">
        <title>Insights into exo- and endoglucanase activities of family 6 glycoside hydrolases from Podospora anserina.</title>
        <authorList>
            <person name="Poidevin L."/>
            <person name="Feliu J."/>
            <person name="Doan A."/>
            <person name="Berrin J.G."/>
            <person name="Bey M."/>
            <person name="Coutinho P.M."/>
            <person name="Henrissat B."/>
            <person name="Record E."/>
            <person name="Heiss-Blanquet S."/>
        </authorList>
    </citation>
    <scope>FUNCTION</scope>
    <scope>CATALYTIC ACTIVITY</scope>
    <scope>BIOPHYSICOCHEMICAL PROPERTIES</scope>
    <scope>GLYCOSYLATION</scope>
</reference>
<keyword id="KW-0119">Carbohydrate metabolism</keyword>
<keyword id="KW-0136">Cellulose degradation</keyword>
<keyword id="KW-1015">Disulfide bond</keyword>
<keyword id="KW-0325">Glycoprotein</keyword>
<keyword id="KW-0326">Glycosidase</keyword>
<keyword id="KW-0378">Hydrolase</keyword>
<keyword id="KW-0624">Polysaccharide degradation</keyword>
<keyword id="KW-1185">Reference proteome</keyword>
<keyword id="KW-0964">Secreted</keyword>
<keyword id="KW-0732">Signal</keyword>
<name>CEL6A_PODAN</name>
<sequence>MAKRLLLTAALAATTLAAPVIEERQNCGSVWSQCGGQGWTGATCCASGSTCVAQNQWYSQCLPGSQVTTTAQAPSSTRTTTSSSSRPTSSSISTSAVNVPTTTTSAGASVTVPPGGGASSTASYSGNPFLGVQQWANSYYSSEVHTLAIPSLTGPMATKAAAVAKVPSFQWMDRNVTVDTLFSGTLADIRAANRAGANPPYAGIFVVYDLPDRDCAAAASNGEWAIADGGAAKYKAYIDRIRHHLVQYSDIRTILVIEPDSLANMVTNMNVPKCQGAANTYKELTVYALKQLNLPNVAMYLDAGHAGWLGWPANIGPAAELFAGIYKDAGRPTSLRGLATNVANYNGWSLSSAPSYTTPNPNFDEKRFVQAFSPLLTAAGFPAHFITDTGRSGKQPTGQLEWGHWCNAIGTGFGPRPTTDTGLDIEDAFVWIKPGGECDGTSDTTAARYDHHCGFADALKPAPEAGQWFQAYFEQLLTNANPPF</sequence>
<organism>
    <name type="scientific">Podospora anserina (strain S / ATCC MYA-4624 / DSM 980 / FGSC 10383)</name>
    <name type="common">Pleurage anserina</name>
    <dbReference type="NCBI Taxonomy" id="515849"/>
    <lineage>
        <taxon>Eukaryota</taxon>
        <taxon>Fungi</taxon>
        <taxon>Dikarya</taxon>
        <taxon>Ascomycota</taxon>
        <taxon>Pezizomycotina</taxon>
        <taxon>Sordariomycetes</taxon>
        <taxon>Sordariomycetidae</taxon>
        <taxon>Sordariales</taxon>
        <taxon>Podosporaceae</taxon>
        <taxon>Podospora</taxon>
        <taxon>Podospora anserina</taxon>
    </lineage>
</organism>
<dbReference type="EC" id="3.2.1.91" evidence="8"/>
<dbReference type="EMBL" id="CU633446">
    <property type="protein sequence ID" value="CAP60942.1"/>
    <property type="molecule type" value="Genomic_DNA"/>
</dbReference>
<dbReference type="EMBL" id="FO904937">
    <property type="protein sequence ID" value="CDP24957.1"/>
    <property type="molecule type" value="Genomic_DNA"/>
</dbReference>
<dbReference type="RefSeq" id="XP_001903170.1">
    <property type="nucleotide sequence ID" value="XM_001903135.1"/>
</dbReference>
<dbReference type="SMR" id="B2ABX7"/>
<dbReference type="STRING" id="515849.B2ABX7"/>
<dbReference type="CAZy" id="CBM1">
    <property type="family name" value="Carbohydrate-Binding Module Family 1"/>
</dbReference>
<dbReference type="CAZy" id="GH6">
    <property type="family name" value="Glycoside Hydrolase Family 6"/>
</dbReference>
<dbReference type="GlyCosmos" id="B2ABX7">
    <property type="glycosylation" value="1 site, No reported glycans"/>
</dbReference>
<dbReference type="GeneID" id="6187194"/>
<dbReference type="KEGG" id="pan:PODANSg182"/>
<dbReference type="VEuPathDB" id="FungiDB:PODANS_0_1250"/>
<dbReference type="eggNOG" id="ENOG502QWHE">
    <property type="taxonomic scope" value="Eukaryota"/>
</dbReference>
<dbReference type="HOGENOM" id="CLU_015488_0_0_1"/>
<dbReference type="InParanoid" id="B2ABX7"/>
<dbReference type="OrthoDB" id="64893at2759"/>
<dbReference type="Proteomes" id="UP000001197">
    <property type="component" value="Chromosome 2"/>
</dbReference>
<dbReference type="GO" id="GO:0005576">
    <property type="term" value="C:extracellular region"/>
    <property type="evidence" value="ECO:0007669"/>
    <property type="project" value="UniProtKB-SubCell"/>
</dbReference>
<dbReference type="GO" id="GO:0016162">
    <property type="term" value="F:cellulose 1,4-beta-cellobiosidase activity"/>
    <property type="evidence" value="ECO:0007669"/>
    <property type="project" value="UniProtKB-EC"/>
</dbReference>
<dbReference type="GO" id="GO:0030248">
    <property type="term" value="F:cellulose binding"/>
    <property type="evidence" value="ECO:0007669"/>
    <property type="project" value="InterPro"/>
</dbReference>
<dbReference type="GO" id="GO:0030245">
    <property type="term" value="P:cellulose catabolic process"/>
    <property type="evidence" value="ECO:0007669"/>
    <property type="project" value="UniProtKB-KW"/>
</dbReference>
<dbReference type="FunFam" id="3.20.20.40:FF:000001">
    <property type="entry name" value="Glucanase"/>
    <property type="match status" value="1"/>
</dbReference>
<dbReference type="Gene3D" id="3.20.20.40">
    <property type="entry name" value="1, 4-beta cellobiohydrolase"/>
    <property type="match status" value="1"/>
</dbReference>
<dbReference type="InterPro" id="IPR016288">
    <property type="entry name" value="Beta_cellobiohydrolase"/>
</dbReference>
<dbReference type="InterPro" id="IPR036434">
    <property type="entry name" value="Beta_cellobiohydrolase_sf"/>
</dbReference>
<dbReference type="InterPro" id="IPR035971">
    <property type="entry name" value="CBD_sf"/>
</dbReference>
<dbReference type="InterPro" id="IPR000254">
    <property type="entry name" value="Cellulose-bd_dom_fun"/>
</dbReference>
<dbReference type="InterPro" id="IPR001524">
    <property type="entry name" value="Glyco_hydro_6_CS"/>
</dbReference>
<dbReference type="PANTHER" id="PTHR34876">
    <property type="match status" value="1"/>
</dbReference>
<dbReference type="PANTHER" id="PTHR34876:SF4">
    <property type="entry name" value="1,4-BETA-D-GLUCAN CELLOBIOHYDROLASE C-RELATED"/>
    <property type="match status" value="1"/>
</dbReference>
<dbReference type="Pfam" id="PF00734">
    <property type="entry name" value="CBM_1"/>
    <property type="match status" value="1"/>
</dbReference>
<dbReference type="Pfam" id="PF01341">
    <property type="entry name" value="Glyco_hydro_6"/>
    <property type="match status" value="1"/>
</dbReference>
<dbReference type="PIRSF" id="PIRSF001100">
    <property type="entry name" value="Beta_cellobiohydrolase"/>
    <property type="match status" value="1"/>
</dbReference>
<dbReference type="PRINTS" id="PR00733">
    <property type="entry name" value="GLHYDRLASE6"/>
</dbReference>
<dbReference type="SMART" id="SM00236">
    <property type="entry name" value="fCBD"/>
    <property type="match status" value="1"/>
</dbReference>
<dbReference type="SUPFAM" id="SSF57180">
    <property type="entry name" value="Cellulose-binding domain"/>
    <property type="match status" value="1"/>
</dbReference>
<dbReference type="SUPFAM" id="SSF51989">
    <property type="entry name" value="Glycosyl hydrolases family 6, cellulases"/>
    <property type="match status" value="1"/>
</dbReference>
<dbReference type="PROSITE" id="PS00562">
    <property type="entry name" value="CBM1_1"/>
    <property type="match status" value="1"/>
</dbReference>
<dbReference type="PROSITE" id="PS51164">
    <property type="entry name" value="CBM1_2"/>
    <property type="match status" value="1"/>
</dbReference>
<dbReference type="PROSITE" id="PS00655">
    <property type="entry name" value="GLYCOSYL_HYDROL_F6_1"/>
    <property type="match status" value="1"/>
</dbReference>
<dbReference type="PROSITE" id="PS00656">
    <property type="entry name" value="GLYCOSYL_HYDROL_F6_2"/>
    <property type="match status" value="1"/>
</dbReference>
<comment type="function">
    <text evidence="8">Exoglucanase that plays an important function in biomass degradation by catalyzing the hydrolysis of the non-reducing end beta-1,4-glucosidic linkages in cellulose and cellotetraose to release cellobiose. Hydrolyzes crystalline and amorphous cellulose but is inactive on hydroxyethyl cellulose, mannan, galactomannan, xyloglucan, arabinoxylan, arabinan, xylan, and pectin.</text>
</comment>
<comment type="catalytic activity">
    <reaction evidence="8">
        <text>Hydrolysis of (1-&gt;4)-beta-D-glucosidic linkages in cellulose and cellotetraose, releasing cellobiose from the non-reducing ends of the chains.</text>
        <dbReference type="EC" id="3.2.1.91"/>
    </reaction>
</comment>
<comment type="biophysicochemical properties">
    <kinetics>
        <KM evidence="8">4.7 uM for cellotetraose</KM>
    </kinetics>
    <phDependence>
        <text evidence="8">Optimum pH is 7.</text>
    </phDependence>
    <temperatureDependence>
        <text evidence="8">Optimum temperature is 55 degrees Celsius.</text>
    </temperatureDependence>
</comment>
<comment type="subunit">
    <text evidence="1">Monomer.</text>
</comment>
<comment type="subcellular location">
    <subcellularLocation>
        <location evidence="10">Secreted</location>
    </subcellularLocation>
</comment>
<comment type="PTM">
    <text evidence="8">Both N- and O-glycosylated.</text>
</comment>
<comment type="similarity">
    <text evidence="10">Belongs to the glycosyl hydrolase 6 (cellulase B) family.</text>
</comment>